<accession>Q8IWL1</accession>
<accession>A4QPA7</accession>
<accession>B2RXI6</accession>
<accession>B2RXK9</accession>
<accession>C9J9I7</accession>
<accession>E3VLC6</accession>
<accession>E3VLC7</accession>
<accession>E3VLC8</accession>
<accession>E3VLC9</accession>
<accession>P07714</accession>
<accession>Q14DV3</accession>
<accession>Q5RIR8</accession>
<accession>Q5RIR9</accession>
<protein>
    <recommendedName>
        <fullName>Pulmonary surfactant-associated protein A2</fullName>
        <shortName>PSP-A</shortName>
        <shortName>PSPA</shortName>
        <shortName>SP-A</shortName>
        <shortName>SP-A2</shortName>
    </recommendedName>
    <alternativeName>
        <fullName>35 kDa pulmonary surfactant-associated protein</fullName>
    </alternativeName>
    <alternativeName>
        <fullName>Alveolar proteinosis protein</fullName>
    </alternativeName>
    <alternativeName>
        <fullName>Collectin-5</fullName>
    </alternativeName>
</protein>
<feature type="signal peptide">
    <location>
        <begin position="1"/>
        <end position="20"/>
    </location>
</feature>
<feature type="chain" id="PRO_0000017458" description="Pulmonary surfactant-associated protein A2">
    <location>
        <begin position="21"/>
        <end position="248"/>
    </location>
</feature>
<feature type="domain" description="Collagen-like">
    <location>
        <begin position="28"/>
        <end position="100"/>
    </location>
</feature>
<feature type="domain" description="C-type lectin" evidence="2">
    <location>
        <begin position="132"/>
        <end position="248"/>
    </location>
</feature>
<feature type="region of interest" description="Disordered" evidence="3">
    <location>
        <begin position="33"/>
        <end position="101"/>
    </location>
</feature>
<feature type="compositionally biased region" description="Basic and acidic residues" evidence="3">
    <location>
        <begin position="42"/>
        <end position="51"/>
    </location>
</feature>
<feature type="compositionally biased region" description="Pro residues" evidence="3">
    <location>
        <begin position="54"/>
        <end position="70"/>
    </location>
</feature>
<feature type="compositionally biased region" description="Low complexity" evidence="3">
    <location>
        <begin position="71"/>
        <end position="82"/>
    </location>
</feature>
<feature type="compositionally biased region" description="Basic and acidic residues" evidence="3">
    <location>
        <begin position="84"/>
        <end position="93"/>
    </location>
</feature>
<feature type="modified residue" description="4-hydroxyproline" evidence="1">
    <location>
        <position position="30"/>
    </location>
</feature>
<feature type="modified residue" description="4-hydroxyproline" evidence="1">
    <location>
        <position position="33"/>
    </location>
</feature>
<feature type="modified residue" description="4-hydroxyproline" evidence="1">
    <location>
        <position position="36"/>
    </location>
</feature>
<feature type="modified residue" description="4-hydroxyproline" evidence="1">
    <location>
        <position position="42"/>
    </location>
</feature>
<feature type="modified residue" description="4-hydroxyproline" evidence="1">
    <location>
        <position position="54"/>
    </location>
</feature>
<feature type="modified residue" description="4-hydroxyproline" evidence="1">
    <location>
        <position position="57"/>
    </location>
</feature>
<feature type="modified residue" description="4-hydroxyproline" evidence="1">
    <location>
        <position position="63"/>
    </location>
</feature>
<feature type="modified residue" description="4-hydroxyproline" evidence="1">
    <location>
        <position position="67"/>
    </location>
</feature>
<feature type="modified residue" description="4-hydroxyproline" evidence="1">
    <location>
        <position position="70"/>
    </location>
</feature>
<feature type="glycosylation site" description="N-linked (GlcNAc...) asparagine" evidence="12">
    <location>
        <position position="207"/>
    </location>
</feature>
<feature type="disulfide bond" description="Interchain" evidence="13">
    <location>
        <position position="26"/>
    </location>
</feature>
<feature type="disulfide bond" evidence="2 7">
    <location>
        <begin position="155"/>
        <end position="246"/>
    </location>
</feature>
<feature type="disulfide bond" evidence="2 7">
    <location>
        <begin position="224"/>
        <end position="238"/>
    </location>
</feature>
<feature type="sequence variant" id="VAR_021293" description="In allele 1A(0); dbSNP:rs1059046." evidence="4 5 6 10 11">
    <original>T</original>
    <variation>N</variation>
    <location>
        <position position="9"/>
    </location>
</feature>
<feature type="sequence variant" id="VAR_063518" description="In dbSNP:rs72659394." evidence="5">
    <original>L</original>
    <variation>W</variation>
    <location>
        <position position="12"/>
    </location>
</feature>
<feature type="sequence variant" id="VAR_021294" description="In dbSNP:rs192907309." evidence="5 11">
    <original>V</original>
    <variation>L</variation>
    <location>
        <position position="50"/>
    </location>
</feature>
<feature type="sequence variant" id="VAR_021295" description="In allele 1A; dbSNP:rs17886395." evidence="5 10 11">
    <original>A</original>
    <variation>P</variation>
    <location>
        <position position="91"/>
    </location>
</feature>
<feature type="sequence variant" id="VAR_086122" description="In ILD2; uncertain significance; impaired secretion." evidence="9">
    <original>N</original>
    <variation>I</variation>
    <location>
        <position position="171"/>
    </location>
</feature>
<feature type="sequence variant" id="VAR_086123" description="In ILD2; impaired secretion." evidence="9">
    <original>V</original>
    <variation>M</variation>
    <location>
        <position position="178"/>
    </location>
</feature>
<feature type="sequence variant" id="VAR_086124" description="In ILD2; uncertain significance; impaired secretion." evidence="9">
    <original>Y</original>
    <variation>C</variation>
    <location>
        <position position="181"/>
    </location>
</feature>
<feature type="sequence variant" id="VAR_063519" description="In ILD2; the mutant protein is retained in the endoplasmic reticulum and is not secreted; dbSNP:rs121917738." evidence="5 8">
    <original>F</original>
    <variation>S</variation>
    <location>
        <position position="198"/>
    </location>
</feature>
<feature type="sequence variant" id="VAR_021296" description="In allele 1A(1), allele 1A(3) and allele 1A(4); dbSNP:rs1965708." evidence="4 5 6 11">
    <original>Q</original>
    <variation>K</variation>
    <location>
        <position position="223"/>
    </location>
</feature>
<feature type="sequence variant" id="VAR_063520" description="In ILD2; the mutant protein is retained in the endoplasmic reticulum and is not secreted; dbSNP:rs121917737." evidence="5">
    <original>G</original>
    <variation>V</variation>
    <location>
        <position position="231"/>
    </location>
</feature>
<feature type="sequence variant" id="VAR_086125" description="In ILD2; impaired secretion." evidence="9">
    <original>W</original>
    <variation>C</variation>
    <location>
        <position position="233"/>
    </location>
</feature>
<feature type="sequence variant" id="VAR_086126" description="In ILD2; impaired secretion." evidence="9">
    <original>W</original>
    <variation>L</variation>
    <location>
        <position position="233"/>
    </location>
</feature>
<feature type="sequence variant" id="VAR_086127" description="In ILD2; impaired secretion." evidence="9">
    <original>W</original>
    <variation>R</variation>
    <location>
        <position position="233"/>
    </location>
</feature>
<feature type="sequence variant" id="VAR_086128" description="In ILD2; impaired secretion." evidence="9">
    <original>C</original>
    <variation>S</variation>
    <location>
        <position position="238"/>
    </location>
</feature>
<feature type="sequence variant" id="VAR_086129" description="In ILD2; uncertain significance; impaired secretion." evidence="9">
    <original>R</original>
    <variation>Q</variation>
    <location>
        <position position="242"/>
    </location>
</feature>
<feature type="sequence conflict" description="In Ref. 2; AAA60319." evidence="12" ref="2">
    <original>E</original>
    <variation>D</variation>
    <location>
        <position position="247"/>
    </location>
</feature>
<dbReference type="EMBL" id="K03475">
    <property type="protein sequence ID" value="AAA36520.1"/>
    <property type="molecule type" value="mRNA"/>
</dbReference>
<dbReference type="EMBL" id="M68519">
    <property type="protein sequence ID" value="AAA60319.1"/>
    <property type="molecule type" value="Genomic_DNA"/>
</dbReference>
<dbReference type="EMBL" id="HQ021421">
    <property type="protein sequence ID" value="ADO27664.1"/>
    <property type="molecule type" value="mRNA"/>
</dbReference>
<dbReference type="EMBL" id="HQ021422">
    <property type="protein sequence ID" value="ADO27665.1"/>
    <property type="molecule type" value="mRNA"/>
</dbReference>
<dbReference type="EMBL" id="HQ021423">
    <property type="protein sequence ID" value="ADO27666.1"/>
    <property type="molecule type" value="mRNA"/>
</dbReference>
<dbReference type="EMBL" id="HQ021424">
    <property type="protein sequence ID" value="ADO27667.1"/>
    <property type="molecule type" value="mRNA"/>
</dbReference>
<dbReference type="EMBL" id="HQ021427">
    <property type="protein sequence ID" value="ADO27670.1"/>
    <property type="molecule type" value="mRNA"/>
</dbReference>
<dbReference type="EMBL" id="HQ021428">
    <property type="protein sequence ID" value="ADO27671.1"/>
    <property type="molecule type" value="mRNA"/>
</dbReference>
<dbReference type="EMBL" id="HQ021429">
    <property type="protein sequence ID" value="ADO27672.1"/>
    <property type="molecule type" value="mRNA"/>
</dbReference>
<dbReference type="EMBL" id="HQ021430">
    <property type="protein sequence ID" value="ADO27673.1"/>
    <property type="molecule type" value="mRNA"/>
</dbReference>
<dbReference type="EMBL" id="AY206682">
    <property type="protein sequence ID" value="AAO13490.1"/>
    <property type="molecule type" value="Genomic_DNA"/>
</dbReference>
<dbReference type="EMBL" id="BX248123">
    <property type="status" value="NOT_ANNOTATED_CDS"/>
    <property type="molecule type" value="Genomic_DNA"/>
</dbReference>
<dbReference type="EMBL" id="BC111571">
    <property type="protein sequence ID" value="AAI11572.1"/>
    <property type="molecule type" value="mRNA"/>
</dbReference>
<dbReference type="EMBL" id="BC139727">
    <property type="protein sequence ID" value="AAI39728.1"/>
    <property type="molecule type" value="mRNA"/>
</dbReference>
<dbReference type="EMBL" id="BC157866">
    <property type="protein sequence ID" value="AAI57867.1"/>
    <property type="molecule type" value="mRNA"/>
</dbReference>
<dbReference type="EMBL" id="BC157890">
    <property type="protein sequence ID" value="AAI57891.1"/>
    <property type="molecule type" value="mRNA"/>
</dbReference>
<dbReference type="CCDS" id="CCDS41540.1"/>
<dbReference type="PIR" id="B25720">
    <property type="entry name" value="LNHUP1"/>
</dbReference>
<dbReference type="PIR" id="I51921">
    <property type="entry name" value="I51921"/>
</dbReference>
<dbReference type="RefSeq" id="NP_001092138.1">
    <property type="nucleotide sequence ID" value="NM_001098668.4"/>
</dbReference>
<dbReference type="RefSeq" id="NP_001307742.1">
    <property type="nucleotide sequence ID" value="NM_001320813.2"/>
</dbReference>
<dbReference type="RefSeq" id="XP_005270189.1">
    <property type="nucleotide sequence ID" value="XM_005270132.4"/>
</dbReference>
<dbReference type="RefSeq" id="XP_011538426.1">
    <property type="nucleotide sequence ID" value="XM_011540124.1"/>
</dbReference>
<dbReference type="RefSeq" id="XP_011538427.1">
    <property type="nucleotide sequence ID" value="XM_011540125.2"/>
</dbReference>
<dbReference type="RefSeq" id="XP_016872097.1">
    <property type="nucleotide sequence ID" value="XM_017016608.1"/>
</dbReference>
<dbReference type="RefSeq" id="XP_047281662.1">
    <property type="nucleotide sequence ID" value="XM_047425706.1"/>
</dbReference>
<dbReference type="SMR" id="Q8IWL1"/>
<dbReference type="BioGRID" id="609641">
    <property type="interactions" value="46"/>
</dbReference>
<dbReference type="FunCoup" id="Q8IWL1">
    <property type="interactions" value="233"/>
</dbReference>
<dbReference type="IntAct" id="Q8IWL1">
    <property type="interactions" value="38"/>
</dbReference>
<dbReference type="GlyCosmos" id="Q8IWL1">
    <property type="glycosylation" value="1 site, No reported glycans"/>
</dbReference>
<dbReference type="GlyGen" id="Q8IWL1">
    <property type="glycosylation" value="2 sites"/>
</dbReference>
<dbReference type="iPTMnet" id="Q8IWL1"/>
<dbReference type="PhosphoSitePlus" id="Q8IWL1"/>
<dbReference type="BioMuta" id="SFTPA2"/>
<dbReference type="DMDM" id="60416439"/>
<dbReference type="MassIVE" id="Q8IWL1"/>
<dbReference type="PeptideAtlas" id="Q8IWL1"/>
<dbReference type="ProteomicsDB" id="15282"/>
<dbReference type="ProteomicsDB" id="70868"/>
<dbReference type="ABCD" id="Q8IWL1">
    <property type="antibodies" value="8 sequenced antibodies"/>
</dbReference>
<dbReference type="Antibodypedia" id="57893">
    <property type="antibodies" value="154 antibodies from 22 providers"/>
</dbReference>
<dbReference type="DNASU" id="729238"/>
<dbReference type="Ensembl" id="ENST00000372325.7">
    <property type="protein sequence ID" value="ENSP00000361400.2"/>
    <property type="gene ID" value="ENSG00000185303.17"/>
</dbReference>
<dbReference type="Ensembl" id="ENST00000372327.9">
    <property type="protein sequence ID" value="ENSP00000361402.5"/>
    <property type="gene ID" value="ENSG00000185303.17"/>
</dbReference>
<dbReference type="GeneID" id="729238"/>
<dbReference type="KEGG" id="hsa:729238"/>
<dbReference type="MANE-Select" id="ENST00000372325.7">
    <property type="protein sequence ID" value="ENSP00000361400.2"/>
    <property type="RefSeq nucleotide sequence ID" value="NM_001098668.4"/>
    <property type="RefSeq protein sequence ID" value="NP_001092138.1"/>
</dbReference>
<dbReference type="UCSC" id="uc001kal.5">
    <property type="organism name" value="human"/>
</dbReference>
<dbReference type="AGR" id="HGNC:10799"/>
<dbReference type="CTD" id="729238"/>
<dbReference type="DisGeNET" id="729238"/>
<dbReference type="GeneCards" id="SFTPA2"/>
<dbReference type="GeneReviews" id="SFTPA2"/>
<dbReference type="HGNC" id="HGNC:10799">
    <property type="gene designation" value="SFTPA2"/>
</dbReference>
<dbReference type="HPA" id="ENSG00000185303">
    <property type="expression patterns" value="Tissue enriched (lung)"/>
</dbReference>
<dbReference type="MalaCards" id="SFTPA2"/>
<dbReference type="MIM" id="178500">
    <property type="type" value="phenotype"/>
</dbReference>
<dbReference type="MIM" id="178642">
    <property type="type" value="gene"/>
</dbReference>
<dbReference type="neXtProt" id="NX_Q8IWL1"/>
<dbReference type="OpenTargets" id="ENSG00000185303"/>
<dbReference type="Orphanet" id="2032">
    <property type="disease" value="Idiopathic pulmonary fibrosis"/>
</dbReference>
<dbReference type="PharmGKB" id="PA35711"/>
<dbReference type="VEuPathDB" id="HostDB:ENSG00000185303"/>
<dbReference type="eggNOG" id="KOG4297">
    <property type="taxonomic scope" value="Eukaryota"/>
</dbReference>
<dbReference type="GeneTree" id="ENSGT00940000156653"/>
<dbReference type="HOGENOM" id="CLU_049894_3_0_1"/>
<dbReference type="InParanoid" id="Q8IWL1"/>
<dbReference type="OMA" id="NWHQHEP"/>
<dbReference type="OrthoDB" id="7357196at2759"/>
<dbReference type="PAN-GO" id="Q8IWL1">
    <property type="GO annotations" value="3 GO annotations based on evolutionary models"/>
</dbReference>
<dbReference type="PhylomeDB" id="Q8IWL1"/>
<dbReference type="TreeFam" id="TF330481"/>
<dbReference type="PathwayCommons" id="Q8IWL1"/>
<dbReference type="Reactome" id="R-HSA-166016">
    <property type="pathway name" value="Toll Like Receptor 4 (TLR4) Cascade"/>
</dbReference>
<dbReference type="Reactome" id="R-HSA-168179">
    <property type="pathway name" value="Toll Like Receptor TLR1:TLR2 Cascade"/>
</dbReference>
<dbReference type="Reactome" id="R-HSA-391160">
    <property type="pathway name" value="Signal regulatory protein family interactions"/>
</dbReference>
<dbReference type="Reactome" id="R-HSA-5683826">
    <property type="pathway name" value="Surfactant metabolism"/>
</dbReference>
<dbReference type="Reactome" id="R-HSA-5686938">
    <property type="pathway name" value="Regulation of TLR by endogenous ligand"/>
</dbReference>
<dbReference type="Reactome" id="R-HSA-5687868">
    <property type="pathway name" value="Defective SFTPA2 causes IPF"/>
</dbReference>
<dbReference type="Reactome" id="R-HSA-5688849">
    <property type="pathway name" value="Defective CSF2RB causes SMDP5"/>
</dbReference>
<dbReference type="Reactome" id="R-HSA-5688890">
    <property type="pathway name" value="Defective CSF2RA causes SMDP4"/>
</dbReference>
<dbReference type="SignaLink" id="Q8IWL1"/>
<dbReference type="BioGRID-ORCS" id="729238">
    <property type="hits" value="16 hits in 1070 CRISPR screens"/>
</dbReference>
<dbReference type="ChiTaRS" id="SFTPA2">
    <property type="organism name" value="human"/>
</dbReference>
<dbReference type="GeneWiki" id="SFTPA2"/>
<dbReference type="GenomeRNAi" id="729238"/>
<dbReference type="Pharos" id="Q8IWL1">
    <property type="development level" value="Tbio"/>
</dbReference>
<dbReference type="PRO" id="PR:Q8IWL1"/>
<dbReference type="Proteomes" id="UP000005640">
    <property type="component" value="Chromosome 10"/>
</dbReference>
<dbReference type="RNAct" id="Q8IWL1">
    <property type="molecule type" value="protein"/>
</dbReference>
<dbReference type="Bgee" id="ENSG00000185303">
    <property type="expression patterns" value="Expressed in lower lobe of lung and 99 other cell types or tissues"/>
</dbReference>
<dbReference type="ExpressionAtlas" id="Q8IWL1">
    <property type="expression patterns" value="baseline and differential"/>
</dbReference>
<dbReference type="GO" id="GO:0045334">
    <property type="term" value="C:clathrin-coated endocytic vesicle"/>
    <property type="evidence" value="ECO:0000304"/>
    <property type="project" value="Reactome"/>
</dbReference>
<dbReference type="GO" id="GO:0005581">
    <property type="term" value="C:collagen trimer"/>
    <property type="evidence" value="ECO:0007669"/>
    <property type="project" value="UniProtKB-KW"/>
</dbReference>
<dbReference type="GO" id="GO:0005789">
    <property type="term" value="C:endoplasmic reticulum membrane"/>
    <property type="evidence" value="ECO:0000304"/>
    <property type="project" value="Reactome"/>
</dbReference>
<dbReference type="GO" id="GO:0005576">
    <property type="term" value="C:extracellular region"/>
    <property type="evidence" value="ECO:0000304"/>
    <property type="project" value="Reactome"/>
</dbReference>
<dbReference type="GO" id="GO:0005615">
    <property type="term" value="C:extracellular space"/>
    <property type="evidence" value="ECO:0000318"/>
    <property type="project" value="GO_Central"/>
</dbReference>
<dbReference type="GO" id="GO:0042599">
    <property type="term" value="C:lamellar body"/>
    <property type="evidence" value="ECO:0000304"/>
    <property type="project" value="Reactome"/>
</dbReference>
<dbReference type="GO" id="GO:0005771">
    <property type="term" value="C:multivesicular body"/>
    <property type="evidence" value="ECO:0000318"/>
    <property type="project" value="GO_Central"/>
</dbReference>
<dbReference type="GO" id="GO:0030246">
    <property type="term" value="F:carbohydrate binding"/>
    <property type="evidence" value="ECO:0007669"/>
    <property type="project" value="UniProtKB-KW"/>
</dbReference>
<dbReference type="GO" id="GO:0007585">
    <property type="term" value="P:respiratory gaseous exchange by respiratory system"/>
    <property type="evidence" value="ECO:0007669"/>
    <property type="project" value="UniProtKB-KW"/>
</dbReference>
<dbReference type="CDD" id="cd03591">
    <property type="entry name" value="CLECT_collectin_like"/>
    <property type="match status" value="1"/>
</dbReference>
<dbReference type="FunFam" id="3.10.100.10:FF:000056">
    <property type="entry name" value="Pulmonary surfactant-associated protein A"/>
    <property type="match status" value="1"/>
</dbReference>
<dbReference type="Gene3D" id="3.10.100.10">
    <property type="entry name" value="Mannose-Binding Protein A, subunit A"/>
    <property type="match status" value="1"/>
</dbReference>
<dbReference type="InterPro" id="IPR001304">
    <property type="entry name" value="C-type_lectin-like"/>
</dbReference>
<dbReference type="InterPro" id="IPR016186">
    <property type="entry name" value="C-type_lectin-like/link_sf"/>
</dbReference>
<dbReference type="InterPro" id="IPR018378">
    <property type="entry name" value="C-type_lectin_CS"/>
</dbReference>
<dbReference type="InterPro" id="IPR051663">
    <property type="entry name" value="CLec_Tetranectin-domain"/>
</dbReference>
<dbReference type="InterPro" id="IPR033990">
    <property type="entry name" value="Collectin_CTLD"/>
</dbReference>
<dbReference type="InterPro" id="IPR016187">
    <property type="entry name" value="CTDL_fold"/>
</dbReference>
<dbReference type="PANTHER" id="PTHR22799:SF1">
    <property type="entry name" value="C-TYPE LECTIN DOMAIN FAMILY 11 MEMBER A"/>
    <property type="match status" value="1"/>
</dbReference>
<dbReference type="PANTHER" id="PTHR22799">
    <property type="entry name" value="TETRANECTIN-RELATED"/>
    <property type="match status" value="1"/>
</dbReference>
<dbReference type="Pfam" id="PF00059">
    <property type="entry name" value="Lectin_C"/>
    <property type="match status" value="1"/>
</dbReference>
<dbReference type="SMART" id="SM00034">
    <property type="entry name" value="CLECT"/>
    <property type="match status" value="1"/>
</dbReference>
<dbReference type="SUPFAM" id="SSF56436">
    <property type="entry name" value="C-type lectin-like"/>
    <property type="match status" value="1"/>
</dbReference>
<dbReference type="SUPFAM" id="SSF57944">
    <property type="entry name" value="Triple coiled coil domain of C-type lectins"/>
    <property type="match status" value="1"/>
</dbReference>
<dbReference type="PROSITE" id="PS00615">
    <property type="entry name" value="C_TYPE_LECTIN_1"/>
    <property type="match status" value="1"/>
</dbReference>
<dbReference type="PROSITE" id="PS50041">
    <property type="entry name" value="C_TYPE_LECTIN_2"/>
    <property type="match status" value="1"/>
</dbReference>
<comment type="function">
    <text>In presence of calcium ions, it binds to surfactant phospholipids and contributes to lower the surface tension at the air-liquid interface in the alveoli of the mammalian lung and is essential for normal respiration.</text>
</comment>
<comment type="subunit">
    <text>Oligomeric complex of 6 set of homotrimers.</text>
</comment>
<comment type="interaction">
    <interactant intactId="EBI-12350685">
        <id>Q8IWL1</id>
    </interactant>
    <interactant intactId="EBI-746987">
        <id>P62166</id>
        <label>NCS1</label>
    </interactant>
    <organismsDiffer>false</organismsDiffer>
    <experiments>3</experiments>
</comment>
<comment type="interaction">
    <interactant intactId="EBI-12350685">
        <id>Q8IWL1</id>
    </interactant>
    <interactant intactId="EBI-947187">
        <id>Q9UHD9</id>
        <label>UBQLN2</label>
    </interactant>
    <organismsDiffer>false</organismsDiffer>
    <experiments>6</experiments>
</comment>
<comment type="subcellular location">
    <subcellularLocation>
        <location evidence="8 9">Secreted</location>
    </subcellularLocation>
    <subcellularLocation>
        <location>Secreted</location>
        <location>Extracellular space</location>
        <location>Extracellular matrix</location>
    </subcellularLocation>
    <subcellularLocation>
        <location>Secreted</location>
        <location>Extracellular space</location>
        <location>Surface film</location>
    </subcellularLocation>
</comment>
<comment type="PTM">
    <text evidence="10">N-acetylated.</text>
</comment>
<comment type="polymorphism">
    <text>At least 6 alleles of SFTPA2 are known: 1A, 1A(0), 1A(1), 1A(2), 1A(3) and 1A(4). The sequence shown is that of allele 1A(2).</text>
</comment>
<comment type="disease" evidence="5 8 9">
    <disease id="DI-02670">
        <name>Interstitial lung disease 2</name>
        <acronym>ILD2</acronym>
        <description>A form of interstitial lung disease, a heterogeneous group of diseases affecting the distal part of the lung and characterized by a progressive remodeling of the alveolar interstitium. The disease spectrum ranges from idiopathic interstitial pneumonia or pneumonitis to idiopathic pulmonary fibrosis, that is associated with an increased risk of developing lung cancer. Clinical features of interstitial lung disease include dyspnea, clubbing of the fingers, and restrictive lung capacity. ILD2 inheritance is autosomal dominant.</description>
        <dbReference type="MIM" id="178500"/>
    </disease>
    <text>The disease is caused by variants affecting the gene represented in this entry.</text>
</comment>
<comment type="miscellaneous">
    <text>Pulmonary surfactant consists of 90% lipid and 10% protein. There are 4 surfactant-associated proteins: 2 collagenous, carbohydrate-binding glycoproteins (SP-A and SP-D) and 2 small hydrophobic proteins (SP-B and SP-C).</text>
</comment>
<comment type="similarity">
    <text evidence="12">Belongs to the SFTPA family.</text>
</comment>
<keyword id="KW-0007">Acetylation</keyword>
<keyword id="KW-0106">Calcium</keyword>
<keyword id="KW-0176">Collagen</keyword>
<keyword id="KW-0225">Disease variant</keyword>
<keyword id="KW-1015">Disulfide bond</keyword>
<keyword id="KW-0272">Extracellular matrix</keyword>
<keyword id="KW-0305">Gaseous exchange</keyword>
<keyword id="KW-0325">Glycoprotein</keyword>
<keyword id="KW-0379">Hydroxylation</keyword>
<keyword id="KW-0430">Lectin</keyword>
<keyword id="KW-1267">Proteomics identification</keyword>
<keyword id="KW-1185">Reference proteome</keyword>
<keyword id="KW-0964">Secreted</keyword>
<keyword id="KW-0732">Signal</keyword>
<keyword id="KW-0767">Surface film</keyword>
<sequence>MWLCPLALTLILMAASGAACEVKDVCVGSPGIPGTPGSHGLPGRDGRDGVKGDPGPPGPMGPPGETPCPPGNNGLPGAPGVPGERGEKGEAGERGPPGLPAHLDEELQATLHDFRHQILQTRGALSLQGSIMTVGEKVFSSNGQSITFDAIQEACARAGGRIAVPRNPEENEAIASFVKKYNTYAYVGLTEGPSPGDFRYSDGTPVNYTNWYRGEPAGRGKEQCVEMYTDGQWNDRNCLYSRLTICEF</sequence>
<organism>
    <name type="scientific">Homo sapiens</name>
    <name type="common">Human</name>
    <dbReference type="NCBI Taxonomy" id="9606"/>
    <lineage>
        <taxon>Eukaryota</taxon>
        <taxon>Metazoa</taxon>
        <taxon>Chordata</taxon>
        <taxon>Craniata</taxon>
        <taxon>Vertebrata</taxon>
        <taxon>Euteleostomi</taxon>
        <taxon>Mammalia</taxon>
        <taxon>Eutheria</taxon>
        <taxon>Euarchontoglires</taxon>
        <taxon>Primates</taxon>
        <taxon>Haplorrhini</taxon>
        <taxon>Catarrhini</taxon>
        <taxon>Hominidae</taxon>
        <taxon>Homo</taxon>
    </lineage>
</organism>
<gene>
    <name type="primary">SFTPA2</name>
    <name type="synonym">COLEC5</name>
    <name type="synonym">PSAP</name>
    <name type="synonym">SFTP1</name>
    <name type="synonym">SFTPA</name>
    <name type="synonym">SFTPA2B</name>
</gene>
<evidence type="ECO:0000250" key="1"/>
<evidence type="ECO:0000255" key="2">
    <source>
        <dbReference type="PROSITE-ProRule" id="PRU00040"/>
    </source>
</evidence>
<evidence type="ECO:0000256" key="3">
    <source>
        <dbReference type="SAM" id="MobiDB-lite"/>
    </source>
</evidence>
<evidence type="ECO:0000269" key="4">
    <source>
    </source>
</evidence>
<evidence type="ECO:0000269" key="5">
    <source>
    </source>
</evidence>
<evidence type="ECO:0000269" key="6">
    <source>
    </source>
</evidence>
<evidence type="ECO:0000269" key="7">
    <source>
    </source>
</evidence>
<evidence type="ECO:0000269" key="8">
    <source>
    </source>
</evidence>
<evidence type="ECO:0000269" key="9">
    <source>
    </source>
</evidence>
<evidence type="ECO:0000269" key="10">
    <source>
    </source>
</evidence>
<evidence type="ECO:0000269" key="11">
    <source ref="4"/>
</evidence>
<evidence type="ECO:0000305" key="12"/>
<evidence type="ECO:0000305" key="13">
    <source>
    </source>
</evidence>
<reference key="1">
    <citation type="journal article" date="1986" name="J. Biol. Chem.">
        <title>Isolation and characterization of cDNA clones for the 35-kDa pulmonary surfactant-associated protein.</title>
        <authorList>
            <person name="Floros J."/>
            <person name="Steinbrink R."/>
            <person name="Jacobs K."/>
            <person name="Phelps D."/>
            <person name="Kriz R."/>
            <person name="Recny M."/>
            <person name="Sultzman L."/>
            <person name="Jones S."/>
            <person name="Taeusch H.W."/>
            <person name="Frank H.A."/>
            <person name="Fritsch E.F."/>
        </authorList>
    </citation>
    <scope>NUCLEOTIDE SEQUENCE [MRNA]</scope>
    <scope>ACETYLATION</scope>
    <scope>VARIANTS ASN-9 AND PRO-91</scope>
</reference>
<reference key="2">
    <citation type="journal article" date="1992" name="Am. J. Respir. Cell Mol. Biol.">
        <title>Characterization of a second human pulmonary surfactant-associated protein SP-A gene.</title>
        <authorList>
            <person name="Katyal S.L."/>
            <person name="Singh G."/>
            <person name="Locker J.L."/>
        </authorList>
    </citation>
    <scope>NUCLEOTIDE SEQUENCE [MRNA]</scope>
</reference>
<reference key="3">
    <citation type="journal article" date="2010" name="Am. J. Physiol.">
        <title>Human SP-A1 (SFTPA1) variant-specific 3' UTRs and poly(A) tail differentially affect the in vitro translation of a reporter gene.</title>
        <authorList>
            <person name="Silveyra P."/>
            <person name="Wang G."/>
            <person name="Floros J."/>
        </authorList>
    </citation>
    <scope>NUCLEOTIDE SEQUENCE [MRNA]</scope>
    <scope>VARIANTS ASN-9 AND LYS-223</scope>
</reference>
<reference key="4">
    <citation type="submission" date="2002-12" db="EMBL/GenBank/DDBJ databases">
        <authorList>
            <consortium name="SeattleSNPs variation discovery resource"/>
        </authorList>
    </citation>
    <scope>NUCLEOTIDE SEQUENCE [GENOMIC DNA]</scope>
    <scope>VARIANTS ASN-9; LEU-50; PRO-91 AND LYS-223</scope>
</reference>
<reference key="5">
    <citation type="journal article" date="2004" name="Nature">
        <title>The DNA sequence and comparative analysis of human chromosome 10.</title>
        <authorList>
            <person name="Deloukas P."/>
            <person name="Earthrowl M.E."/>
            <person name="Grafham D.V."/>
            <person name="Rubenfield M."/>
            <person name="French L."/>
            <person name="Steward C.A."/>
            <person name="Sims S.K."/>
            <person name="Jones M.C."/>
            <person name="Searle S."/>
            <person name="Scott C."/>
            <person name="Howe K."/>
            <person name="Hunt S.E."/>
            <person name="Andrews T.D."/>
            <person name="Gilbert J.G.R."/>
            <person name="Swarbreck D."/>
            <person name="Ashurst J.L."/>
            <person name="Taylor A."/>
            <person name="Battles J."/>
            <person name="Bird C.P."/>
            <person name="Ainscough R."/>
            <person name="Almeida J.P."/>
            <person name="Ashwell R.I.S."/>
            <person name="Ambrose K.D."/>
            <person name="Babbage A.K."/>
            <person name="Bagguley C.L."/>
            <person name="Bailey J."/>
            <person name="Banerjee R."/>
            <person name="Bates K."/>
            <person name="Beasley H."/>
            <person name="Bray-Allen S."/>
            <person name="Brown A.J."/>
            <person name="Brown J.Y."/>
            <person name="Burford D.C."/>
            <person name="Burrill W."/>
            <person name="Burton J."/>
            <person name="Cahill P."/>
            <person name="Camire D."/>
            <person name="Carter N.P."/>
            <person name="Chapman J.C."/>
            <person name="Clark S.Y."/>
            <person name="Clarke G."/>
            <person name="Clee C.M."/>
            <person name="Clegg S."/>
            <person name="Corby N."/>
            <person name="Coulson A."/>
            <person name="Dhami P."/>
            <person name="Dutta I."/>
            <person name="Dunn M."/>
            <person name="Faulkner L."/>
            <person name="Frankish A."/>
            <person name="Frankland J.A."/>
            <person name="Garner P."/>
            <person name="Garnett J."/>
            <person name="Gribble S."/>
            <person name="Griffiths C."/>
            <person name="Grocock R."/>
            <person name="Gustafson E."/>
            <person name="Hammond S."/>
            <person name="Harley J.L."/>
            <person name="Hart E."/>
            <person name="Heath P.D."/>
            <person name="Ho T.P."/>
            <person name="Hopkins B."/>
            <person name="Horne J."/>
            <person name="Howden P.J."/>
            <person name="Huckle E."/>
            <person name="Hynds C."/>
            <person name="Johnson C."/>
            <person name="Johnson D."/>
            <person name="Kana A."/>
            <person name="Kay M."/>
            <person name="Kimberley A.M."/>
            <person name="Kershaw J.K."/>
            <person name="Kokkinaki M."/>
            <person name="Laird G.K."/>
            <person name="Lawlor S."/>
            <person name="Lee H.M."/>
            <person name="Leongamornlert D.A."/>
            <person name="Laird G."/>
            <person name="Lloyd C."/>
            <person name="Lloyd D.M."/>
            <person name="Loveland J."/>
            <person name="Lovell J."/>
            <person name="McLaren S."/>
            <person name="McLay K.E."/>
            <person name="McMurray A."/>
            <person name="Mashreghi-Mohammadi M."/>
            <person name="Matthews L."/>
            <person name="Milne S."/>
            <person name="Nickerson T."/>
            <person name="Nguyen M."/>
            <person name="Overton-Larty E."/>
            <person name="Palmer S.A."/>
            <person name="Pearce A.V."/>
            <person name="Peck A.I."/>
            <person name="Pelan S."/>
            <person name="Phillimore B."/>
            <person name="Porter K."/>
            <person name="Rice C.M."/>
            <person name="Rogosin A."/>
            <person name="Ross M.T."/>
            <person name="Sarafidou T."/>
            <person name="Sehra H.K."/>
            <person name="Shownkeen R."/>
            <person name="Skuce C.D."/>
            <person name="Smith M."/>
            <person name="Standring L."/>
            <person name="Sycamore N."/>
            <person name="Tester J."/>
            <person name="Thorpe A."/>
            <person name="Torcasso W."/>
            <person name="Tracey A."/>
            <person name="Tromans A."/>
            <person name="Tsolas J."/>
            <person name="Wall M."/>
            <person name="Walsh J."/>
            <person name="Wang H."/>
            <person name="Weinstock K."/>
            <person name="West A.P."/>
            <person name="Willey D.L."/>
            <person name="Whitehead S.L."/>
            <person name="Wilming L."/>
            <person name="Wray P.W."/>
            <person name="Young L."/>
            <person name="Chen Y."/>
            <person name="Lovering R.C."/>
            <person name="Moschonas N.K."/>
            <person name="Siebert R."/>
            <person name="Fechtel K."/>
            <person name="Bentley D."/>
            <person name="Durbin R.M."/>
            <person name="Hubbard T."/>
            <person name="Doucette-Stamm L."/>
            <person name="Beck S."/>
            <person name="Smith D.R."/>
            <person name="Rogers J."/>
        </authorList>
    </citation>
    <scope>NUCLEOTIDE SEQUENCE [LARGE SCALE GENOMIC DNA]</scope>
</reference>
<reference key="6">
    <citation type="journal article" date="2004" name="Genome Res.">
        <title>The status, quality, and expansion of the NIH full-length cDNA project: the Mammalian Gene Collection (MGC).</title>
        <authorList>
            <consortium name="The MGC Project Team"/>
        </authorList>
    </citation>
    <scope>NUCLEOTIDE SEQUENCE [LARGE SCALE MRNA]</scope>
    <scope>VARIANTS ASN-9 AND LYS-223</scope>
</reference>
<reference key="7">
    <citation type="journal article" date="1989" name="Am. J. Physiol.">
        <title>Studies of the structure of lung surfactant protein SP-A.</title>
        <authorList>
            <person name="Haagsman H.P."/>
            <person name="White R.T."/>
            <person name="Schilling J."/>
            <person name="Lau K."/>
            <person name="Benson B.J."/>
            <person name="Golden J."/>
            <person name="Hawgood S."/>
            <person name="Clements J.A."/>
        </authorList>
    </citation>
    <scope>DISULFIDE BONDS</scope>
</reference>
<reference key="8">
    <citation type="journal article" date="1998" name="Biochim. Biophys. Acta">
        <title>Genetics of the hydrophilic surfactant proteins A and D.</title>
        <authorList>
            <person name="Floros J."/>
            <person name="Hoover R.R."/>
        </authorList>
    </citation>
    <scope>DEFINITION OF SFTPA2 ALLELES</scope>
</reference>
<reference key="9">
    <citation type="journal article" date="2009" name="Am. J. Hum. Genet.">
        <title>Genetic defects in surfactant protein A2 are associated with pulmonary fibrosis and lung cancer.</title>
        <authorList>
            <person name="Wang Y."/>
            <person name="Kuan P.J."/>
            <person name="Xing C."/>
            <person name="Cronkhite J.T."/>
            <person name="Torres F."/>
            <person name="Rosenblatt R.L."/>
            <person name="DiMaio J.M."/>
            <person name="Kinch L.N."/>
            <person name="Grishin N.V."/>
            <person name="Garcia C.K."/>
        </authorList>
    </citation>
    <scope>VARIANTS ASN-9; TRP-12; LEU-50; PRO-91 AND LYS-223</scope>
    <scope>VARIANTS ILD2 SER-198 AND VAL-231</scope>
</reference>
<reference key="10">
    <citation type="journal article" date="2016" name="Hum. Mol. Genet.">
        <title>Germline SFTPA1 mutation in familial idiopathic interstitial pneumonia and lung cancer.</title>
        <authorList>
            <person name="Nathan N."/>
            <person name="Giraud V."/>
            <person name="Picard C."/>
            <person name="Nunes H."/>
            <person name="Dastot-Le Moal F."/>
            <person name="Copin B."/>
            <person name="Galeron L."/>
            <person name="De Ligniville A."/>
            <person name="Kuziner N."/>
            <person name="Reynaud-Gaubert M."/>
            <person name="Valeyre D."/>
            <person name="Couderc L.J."/>
            <person name="Chinet T."/>
            <person name="Borie R."/>
            <person name="Crestani B."/>
            <person name="Simansour M."/>
            <person name="Nau V."/>
            <person name="Tissier S."/>
            <person name="Duquesnoy P."/>
            <person name="Mansour-Hendili L."/>
            <person name="Legendre M."/>
            <person name="Kannengiesser C."/>
            <person name="Coulomb-L'Hermine A."/>
            <person name="Gouya L."/>
            <person name="Amselem S."/>
            <person name="Clement A."/>
        </authorList>
    </citation>
    <scope>CHARACTERIZATION OF VARIANT ILD2 SER-198</scope>
    <scope>SUBCELLULAR LOCATION</scope>
</reference>
<reference key="11">
    <citation type="journal article" date="2020" name="Eur. Respir. J.">
        <title>Functional assessment and phenotypic heterogeneity of SFTPA1 and SFTPA2 mutations in interstitial lung diseases and lung cancer.</title>
        <authorList>
            <person name="Legendre M."/>
            <person name="Butt A."/>
            <person name="Borie R."/>
            <person name="Debray M.P."/>
            <person name="Bouvry D."/>
            <person name="Filhol-Blin E."/>
            <person name="Desroziers T."/>
            <person name="Nau V."/>
            <person name="Copin B."/>
            <person name="Dastot-Le Moal F."/>
            <person name="Hery M."/>
            <person name="Duquesnoy P."/>
            <person name="Allou N."/>
            <person name="Bergeron A."/>
            <person name="Bermudez J."/>
            <person name="Cazes A."/>
            <person name="Chene A.L."/>
            <person name="Cottin V."/>
            <person name="Crestani B."/>
            <person name="Dalphin J.C."/>
            <person name="Dombret C."/>
            <person name="Doray B."/>
            <person name="Dupin C."/>
            <person name="Giraud V."/>
            <person name="Gondouin A."/>
            <person name="Gouya L."/>
            <person name="Israel-Biet D."/>
            <person name="Kannengiesser C."/>
            <person name="Le Borgne A."/>
            <person name="Leroy S."/>
            <person name="Longchampt E."/>
            <person name="Lorillon G."/>
            <person name="Nunes H."/>
            <person name="Picard C."/>
            <person name="Reynaud-Gaubert M."/>
            <person name="Traclet J."/>
            <person name="de Vuyst P."/>
            <person name="Coulomb L'Hermine A."/>
            <person name="Clement A."/>
            <person name="Amselem S."/>
            <person name="Nathan N."/>
        </authorList>
    </citation>
    <scope>VARIANTS ILD2 ILE-171; MET-178; CYS-181; ARG-233; CYS-233; LEU-233; SER-238 AND GLN-242</scope>
    <scope>CHARACTERIZATION OF VARIANTS ILD2 ILE-171; MET-178; CYS-181; ARG-233; CYS-233; LEU-233; SER-238 AND GLN-242</scope>
    <scope>SUBCELLULAR LOCATION</scope>
</reference>
<name>SFPA2_HUMAN</name>
<proteinExistence type="evidence at protein level"/>